<feature type="chain" id="PRO_0000111511" description="Auxin response factor 7">
    <location>
        <begin position="1"/>
        <end position="1164"/>
    </location>
</feature>
<feature type="domain" description="PB1" evidence="2">
    <location>
        <begin position="1037"/>
        <end position="1130"/>
    </location>
</feature>
<feature type="DNA-binding region" description="TF-B3" evidence="1">
    <location>
        <begin position="127"/>
        <end position="229"/>
    </location>
</feature>
<feature type="region of interest" description="Disordered" evidence="3">
    <location>
        <begin position="451"/>
        <end position="505"/>
    </location>
</feature>
<feature type="region of interest" description="Disordered" evidence="3">
    <location>
        <begin position="536"/>
        <end position="555"/>
    </location>
</feature>
<feature type="region of interest" description="Disordered" evidence="3">
    <location>
        <begin position="570"/>
        <end position="728"/>
    </location>
</feature>
<feature type="region of interest" description="Disordered" evidence="3">
    <location>
        <begin position="765"/>
        <end position="858"/>
    </location>
</feature>
<feature type="region of interest" description="Disordered" evidence="3">
    <location>
        <begin position="903"/>
        <end position="930"/>
    </location>
</feature>
<feature type="region of interest" description="Disordered" evidence="3">
    <location>
        <begin position="1145"/>
        <end position="1164"/>
    </location>
</feature>
<feature type="compositionally biased region" description="Polar residues" evidence="3">
    <location>
        <begin position="464"/>
        <end position="489"/>
    </location>
</feature>
<feature type="compositionally biased region" description="Low complexity" evidence="3">
    <location>
        <begin position="570"/>
        <end position="635"/>
    </location>
</feature>
<feature type="compositionally biased region" description="Polar residues" evidence="3">
    <location>
        <begin position="637"/>
        <end position="651"/>
    </location>
</feature>
<feature type="compositionally biased region" description="Low complexity" evidence="3">
    <location>
        <begin position="652"/>
        <end position="671"/>
    </location>
</feature>
<feature type="compositionally biased region" description="Polar residues" evidence="3">
    <location>
        <begin position="678"/>
        <end position="710"/>
    </location>
</feature>
<feature type="compositionally biased region" description="Low complexity" evidence="3">
    <location>
        <begin position="711"/>
        <end position="728"/>
    </location>
</feature>
<feature type="compositionally biased region" description="Low complexity" evidence="3">
    <location>
        <begin position="765"/>
        <end position="790"/>
    </location>
</feature>
<feature type="compositionally biased region" description="Polar residues" evidence="3">
    <location>
        <begin position="791"/>
        <end position="808"/>
    </location>
</feature>
<feature type="compositionally biased region" description="Low complexity" evidence="3">
    <location>
        <begin position="841"/>
        <end position="851"/>
    </location>
</feature>
<feature type="compositionally biased region" description="Polar residues" evidence="3">
    <location>
        <begin position="903"/>
        <end position="921"/>
    </location>
</feature>
<feature type="splice variant" id="VSP_010090" description="In isoform 2." evidence="22">
    <original>R</original>
    <variation>RW</variation>
    <location>
        <position position="270"/>
    </location>
</feature>
<feature type="splice variant" id="VSP_010091" description="In isoform 3." evidence="21">
    <location>
        <begin position="1144"/>
        <end position="1158"/>
    </location>
</feature>
<feature type="mutagenesis site" description="Loss of oligomerization." evidence="12">
    <original>K</original>
    <variation>A</variation>
    <location>
        <position position="1041"/>
    </location>
</feature>
<feature type="mutagenesis site" description="Loss of oligomerization; when associated with A-1095. Loss of oligomerization; when associated with A-1041 and A-1095." evidence="12">
    <original>D</original>
    <variation>A</variation>
    <location>
        <position position="1091"/>
    </location>
</feature>
<feature type="mutagenesis site" description="Loss of oligomerization; when associated with A-1091. Loss of oligomerization; when associated with A-1041 and A-1091." evidence="12">
    <original>D</original>
    <variation>A</variation>
    <location>
        <position position="1095"/>
    </location>
</feature>
<feature type="sequence conflict" description="In Ref. 3; AAD04807." evidence="23" ref="3">
    <original>D</original>
    <variation>N</variation>
    <location>
        <position position="108"/>
    </location>
</feature>
<feature type="sequence conflict" description="In Ref. 3; AAD04807." evidence="23" ref="3">
    <original>L</original>
    <variation>F</variation>
    <location>
        <position position="205"/>
    </location>
</feature>
<feature type="sequence conflict" description="In Ref. 3; AAD04807." evidence="23" ref="3">
    <original>K</original>
    <variation>E</variation>
    <location>
        <position position="327"/>
    </location>
</feature>
<feature type="sequence conflict" description="In Ref. 3; AAD04807." evidence="23" ref="3">
    <original>H</original>
    <variation>D</variation>
    <location>
        <position position="470"/>
    </location>
</feature>
<feature type="sequence conflict" description="In Ref. 1; AAD02218." evidence="23" ref="1">
    <original>S</original>
    <variation>A</variation>
    <location>
        <position position="626"/>
    </location>
</feature>
<feature type="sequence conflict" description="In Ref. 1; AAD02218." evidence="23" ref="1">
    <original>Q</original>
    <variation>H</variation>
    <location>
        <position position="637"/>
    </location>
</feature>
<feature type="sequence conflict" description="In Ref. 3; AAD04807." evidence="23" ref="3">
    <original>N</original>
    <variation>I</variation>
    <location>
        <position position="800"/>
    </location>
</feature>
<feature type="sequence conflict" description="In Ref. 9; AAB92475." evidence="23" ref="9">
    <location>
        <begin position="839"/>
        <end position="853"/>
    </location>
</feature>
<feature type="sequence conflict" description="In Ref. 9; AAB92475." evidence="23" ref="9">
    <original>T</original>
    <variation>N</variation>
    <location>
        <position position="920"/>
    </location>
</feature>
<feature type="sequence conflict" description="In Ref. 9; AAB92475." evidence="23" ref="9">
    <location>
        <begin position="1038"/>
        <end position="1052"/>
    </location>
</feature>
<feature type="strand" evidence="26">
    <location>
        <begin position="1040"/>
        <end position="1044"/>
    </location>
</feature>
<feature type="strand" evidence="26">
    <location>
        <begin position="1049"/>
        <end position="1052"/>
    </location>
</feature>
<feature type="helix" evidence="26">
    <location>
        <begin position="1054"/>
        <end position="1056"/>
    </location>
</feature>
<feature type="strand" evidence="26">
    <location>
        <begin position="1057"/>
        <end position="1059"/>
    </location>
</feature>
<feature type="helix" evidence="26">
    <location>
        <begin position="1060"/>
        <end position="1070"/>
    </location>
</feature>
<feature type="turn" evidence="26">
    <location>
        <begin position="1074"/>
        <end position="1078"/>
    </location>
</feature>
<feature type="turn" evidence="26">
    <location>
        <begin position="1080"/>
        <end position="1082"/>
    </location>
</feature>
<feature type="strand" evidence="26">
    <location>
        <begin position="1084"/>
        <end position="1091"/>
    </location>
</feature>
<feature type="turn" evidence="26">
    <location>
        <begin position="1092"/>
        <end position="1094"/>
    </location>
</feature>
<feature type="strand" evidence="26">
    <location>
        <begin position="1095"/>
        <end position="1098"/>
    </location>
</feature>
<feature type="helix" evidence="26">
    <location>
        <begin position="1104"/>
        <end position="1110"/>
    </location>
</feature>
<feature type="strand" evidence="26">
    <location>
        <begin position="1113"/>
        <end position="1117"/>
    </location>
</feature>
<feature type="helix" evidence="26">
    <location>
        <begin position="1119"/>
        <end position="1123"/>
    </location>
</feature>
<proteinExistence type="evidence at protein level"/>
<dbReference type="EMBL" id="AF042195">
    <property type="protein sequence ID" value="AAD02218.1"/>
    <property type="molecule type" value="mRNA"/>
</dbReference>
<dbReference type="EMBL" id="AY008392">
    <property type="protein sequence ID" value="AAG35177.1"/>
    <property type="molecule type" value="Genomic_DNA"/>
</dbReference>
<dbReference type="EMBL" id="AY669789">
    <property type="protein sequence ID" value="AAT67073.1"/>
    <property type="molecule type" value="mRNA"/>
</dbReference>
<dbReference type="EMBL" id="AF022368">
    <property type="protein sequence ID" value="AAD04807.1"/>
    <property type="molecule type" value="mRNA"/>
</dbReference>
<dbReference type="EMBL" id="AF186466">
    <property type="protein sequence ID" value="AAF71831.1"/>
    <property type="molecule type" value="Genomic_DNA"/>
</dbReference>
<dbReference type="EMBL" id="AF296832">
    <property type="status" value="NOT_ANNOTATED_CDS"/>
    <property type="molecule type" value="Genomic_DNA"/>
</dbReference>
<dbReference type="EMBL" id="CP002688">
    <property type="protein sequence ID" value="AED92884.1"/>
    <property type="molecule type" value="Genomic_DNA"/>
</dbReference>
<dbReference type="EMBL" id="CP002688">
    <property type="protein sequence ID" value="AED92885.1"/>
    <property type="molecule type" value="Genomic_DNA"/>
</dbReference>
<dbReference type="EMBL" id="AY080595">
    <property type="protein sequence ID" value="AAL85006.1"/>
    <property type="molecule type" value="mRNA"/>
</dbReference>
<dbReference type="EMBL" id="U49077">
    <property type="protein sequence ID" value="AAB84358.1"/>
    <property type="molecule type" value="mRNA"/>
</dbReference>
<dbReference type="EMBL" id="U79555">
    <property type="protein sequence ID" value="AAB92474.1"/>
    <property type="status" value="ALT_FRAME"/>
    <property type="molecule type" value="mRNA"/>
</dbReference>
<dbReference type="EMBL" id="U79556">
    <property type="protein sequence ID" value="AAB92475.1"/>
    <property type="molecule type" value="mRNA"/>
</dbReference>
<dbReference type="EMBL" id="AK226185">
    <property type="protein sequence ID" value="BAE98350.1"/>
    <property type="molecule type" value="mRNA"/>
</dbReference>
<dbReference type="RefSeq" id="NP_851046.1">
    <molecule id="P93022-2"/>
    <property type="nucleotide sequence ID" value="NM_180715.1"/>
</dbReference>
<dbReference type="RefSeq" id="NP_851047.1">
    <molecule id="P93022-1"/>
    <property type="nucleotide sequence ID" value="NM_180716.3"/>
</dbReference>
<dbReference type="PDB" id="4NJ6">
    <property type="method" value="X-ray"/>
    <property type="resolution" value="2.40 A"/>
    <property type="chains" value="A/B/C/D/E/F/G/H/I/J/K/L/M/N/O/P=1036-1126"/>
</dbReference>
<dbReference type="PDB" id="4NJ7">
    <property type="method" value="X-ray"/>
    <property type="resolution" value="3.00 A"/>
    <property type="chains" value="A/B/C/D/E/F/G/H/I/J/K/L/M/N/O/P=1036-1126"/>
</dbReference>
<dbReference type="PDBsum" id="4NJ6"/>
<dbReference type="PDBsum" id="4NJ7"/>
<dbReference type="SMR" id="P93022"/>
<dbReference type="BioGRID" id="17471">
    <property type="interactions" value="37"/>
</dbReference>
<dbReference type="DIP" id="DIP-34948N"/>
<dbReference type="FunCoup" id="P93022">
    <property type="interactions" value="694"/>
</dbReference>
<dbReference type="IntAct" id="P93022">
    <property type="interactions" value="28"/>
</dbReference>
<dbReference type="STRING" id="3702.P93022"/>
<dbReference type="GlyGen" id="P93022">
    <property type="glycosylation" value="1 site, 1 O-linked glycan (1 site)"/>
</dbReference>
<dbReference type="iPTMnet" id="P93022"/>
<dbReference type="PaxDb" id="3702-AT5G20730.1"/>
<dbReference type="ProteomicsDB" id="241021">
    <molecule id="P93022-1"/>
</dbReference>
<dbReference type="EnsemblPlants" id="AT5G20730.1">
    <molecule id="P93022-2"/>
    <property type="protein sequence ID" value="AT5G20730.1"/>
    <property type="gene ID" value="AT5G20730"/>
</dbReference>
<dbReference type="EnsemblPlants" id="AT5G20730.2">
    <molecule id="P93022-1"/>
    <property type="protein sequence ID" value="AT5G20730.2"/>
    <property type="gene ID" value="AT5G20730"/>
</dbReference>
<dbReference type="GeneID" id="832196"/>
<dbReference type="Gramene" id="AT5G20730.1">
    <molecule id="P93022-2"/>
    <property type="protein sequence ID" value="AT5G20730.1"/>
    <property type="gene ID" value="AT5G20730"/>
</dbReference>
<dbReference type="Gramene" id="AT5G20730.2">
    <molecule id="P93022-1"/>
    <property type="protein sequence ID" value="AT5G20730.2"/>
    <property type="gene ID" value="AT5G20730"/>
</dbReference>
<dbReference type="KEGG" id="ath:AT5G20730"/>
<dbReference type="Araport" id="AT5G20730"/>
<dbReference type="TAIR" id="AT5G20730">
    <property type="gene designation" value="NPH4"/>
</dbReference>
<dbReference type="eggNOG" id="ENOG502QV9B">
    <property type="taxonomic scope" value="Eukaryota"/>
</dbReference>
<dbReference type="InParanoid" id="P93022"/>
<dbReference type="EvolutionaryTrace" id="P93022"/>
<dbReference type="PRO" id="PR:P93022"/>
<dbReference type="Proteomes" id="UP000006548">
    <property type="component" value="Chromosome 5"/>
</dbReference>
<dbReference type="ExpressionAtlas" id="P93022">
    <property type="expression patterns" value="baseline and differential"/>
</dbReference>
<dbReference type="GO" id="GO:0005634">
    <property type="term" value="C:nucleus"/>
    <property type="evidence" value="ECO:0000314"/>
    <property type="project" value="UniProtKB"/>
</dbReference>
<dbReference type="GO" id="GO:0003677">
    <property type="term" value="F:DNA binding"/>
    <property type="evidence" value="ECO:0000314"/>
    <property type="project" value="TAIR"/>
</dbReference>
<dbReference type="GO" id="GO:0003700">
    <property type="term" value="F:DNA-binding transcription factor activity"/>
    <property type="evidence" value="ECO:0000250"/>
    <property type="project" value="TAIR"/>
</dbReference>
<dbReference type="GO" id="GO:0009734">
    <property type="term" value="P:auxin-activated signaling pathway"/>
    <property type="evidence" value="ECO:0007669"/>
    <property type="project" value="UniProtKB-KW"/>
</dbReference>
<dbReference type="GO" id="GO:0009785">
    <property type="term" value="P:blue light signaling pathway"/>
    <property type="evidence" value="ECO:0000315"/>
    <property type="project" value="TAIR"/>
</dbReference>
<dbReference type="GO" id="GO:1990110">
    <property type="term" value="P:callus formation"/>
    <property type="evidence" value="ECO:0000315"/>
    <property type="project" value="UniProtKB"/>
</dbReference>
<dbReference type="GO" id="GO:0009630">
    <property type="term" value="P:gravitropism"/>
    <property type="evidence" value="ECO:0000304"/>
    <property type="project" value="TAIR"/>
</dbReference>
<dbReference type="GO" id="GO:0048527">
    <property type="term" value="P:lateral root development"/>
    <property type="evidence" value="ECO:0000316"/>
    <property type="project" value="TAIR"/>
</dbReference>
<dbReference type="GO" id="GO:0010311">
    <property type="term" value="P:lateral root formation"/>
    <property type="evidence" value="ECO:0000316"/>
    <property type="project" value="TAIR"/>
</dbReference>
<dbReference type="GO" id="GO:0048366">
    <property type="term" value="P:leaf development"/>
    <property type="evidence" value="ECO:0000316"/>
    <property type="project" value="TAIR"/>
</dbReference>
<dbReference type="GO" id="GO:0009638">
    <property type="term" value="P:phototropism"/>
    <property type="evidence" value="ECO:0000315"/>
    <property type="project" value="TAIR"/>
</dbReference>
<dbReference type="GO" id="GO:0045893">
    <property type="term" value="P:positive regulation of DNA-templated transcription"/>
    <property type="evidence" value="ECO:0000315"/>
    <property type="project" value="TAIR"/>
</dbReference>
<dbReference type="GO" id="GO:0009733">
    <property type="term" value="P:response to auxin"/>
    <property type="evidence" value="ECO:0000315"/>
    <property type="project" value="TAIR"/>
</dbReference>
<dbReference type="GO" id="GO:0009723">
    <property type="term" value="P:response to ethylene"/>
    <property type="evidence" value="ECO:0000316"/>
    <property type="project" value="TAIR"/>
</dbReference>
<dbReference type="CDD" id="cd10017">
    <property type="entry name" value="B3_DNA"/>
    <property type="match status" value="1"/>
</dbReference>
<dbReference type="FunFam" id="2.30.30.1040:FF:000001">
    <property type="entry name" value="Auxin response factor"/>
    <property type="match status" value="1"/>
</dbReference>
<dbReference type="FunFam" id="2.40.330.10:FF:000001">
    <property type="entry name" value="Auxin response factor"/>
    <property type="match status" value="1"/>
</dbReference>
<dbReference type="FunFam" id="3.10.20.90:FF:000047">
    <property type="entry name" value="Auxin response factor"/>
    <property type="match status" value="1"/>
</dbReference>
<dbReference type="Gene3D" id="2.30.30.1040">
    <property type="match status" value="1"/>
</dbReference>
<dbReference type="Gene3D" id="2.40.330.10">
    <property type="entry name" value="DNA-binding pseudobarrel domain"/>
    <property type="match status" value="1"/>
</dbReference>
<dbReference type="Gene3D" id="3.10.20.90">
    <property type="entry name" value="Phosphatidylinositol 3-kinase Catalytic Subunit, Chain A, domain 1"/>
    <property type="match status" value="1"/>
</dbReference>
<dbReference type="InterPro" id="IPR010525">
    <property type="entry name" value="ARF_dom"/>
</dbReference>
<dbReference type="InterPro" id="IPR044835">
    <property type="entry name" value="ARF_plant"/>
</dbReference>
<dbReference type="InterPro" id="IPR033389">
    <property type="entry name" value="AUX/IAA_dom"/>
</dbReference>
<dbReference type="InterPro" id="IPR003340">
    <property type="entry name" value="B3_DNA-bd"/>
</dbReference>
<dbReference type="InterPro" id="IPR015300">
    <property type="entry name" value="DNA-bd_pseudobarrel_sf"/>
</dbReference>
<dbReference type="InterPro" id="IPR053793">
    <property type="entry name" value="PB1-like"/>
</dbReference>
<dbReference type="PANTHER" id="PTHR31384">
    <property type="entry name" value="AUXIN RESPONSE FACTOR 4-RELATED"/>
    <property type="match status" value="1"/>
</dbReference>
<dbReference type="PANTHER" id="PTHR31384:SF93">
    <property type="entry name" value="AUXIN RESPONSE FACTOR 7"/>
    <property type="match status" value="1"/>
</dbReference>
<dbReference type="Pfam" id="PF06507">
    <property type="entry name" value="ARF_AD"/>
    <property type="match status" value="1"/>
</dbReference>
<dbReference type="Pfam" id="PF02309">
    <property type="entry name" value="AUX_IAA"/>
    <property type="match status" value="1"/>
</dbReference>
<dbReference type="Pfam" id="PF02362">
    <property type="entry name" value="B3"/>
    <property type="match status" value="1"/>
</dbReference>
<dbReference type="SMART" id="SM01019">
    <property type="entry name" value="B3"/>
    <property type="match status" value="1"/>
</dbReference>
<dbReference type="SUPFAM" id="SSF54277">
    <property type="entry name" value="CAD &amp; PB1 domains"/>
    <property type="match status" value="1"/>
</dbReference>
<dbReference type="SUPFAM" id="SSF101936">
    <property type="entry name" value="DNA-binding pseudobarrel domain"/>
    <property type="match status" value="1"/>
</dbReference>
<dbReference type="PROSITE" id="PS50863">
    <property type="entry name" value="B3"/>
    <property type="match status" value="1"/>
</dbReference>
<dbReference type="PROSITE" id="PS51745">
    <property type="entry name" value="PB1"/>
    <property type="match status" value="1"/>
</dbReference>
<sequence length="1164" mass="128886">MKAPSSNGVSPNPVEGERRNINSELWHACAGPLISLPPAGSLVVYFPQGHSEQVAASMQKQTDFIPSYPNLPSKLICMLHNVTLNADPETDEVYAQMTLQPVNKYDRDALLASDMGLKLNRQPNEFFCKTLTASDTSTHGGFSVPRRAAEKIFPALDFSMQPPCQELVAKDIHDNTWTFRHIYRGQPKRHLLTTGWSVFVSTKRLFAGDSVLFIRDGKAQLLLGIRRANRQQPALSSSVISSDSMHIGVLAAAAHANANNSPFTIFYNPRAAPAEFVVPLAKYTKAMYAQVSLGMRFRMIFETEECGVRRYMGTVTGISDLDPVRWKNSQWRNLQIGWDESAAGDRPSRVSVWDIEPVLTPFYICPPPFFRPRFSGQPGMPDDETDMESALKRAMPWLDNSLEMKDPSSTIFPGLSLVQWMNMQQQNGQLPSAAAQPGFFPSMLSPTAALHNNLGGTDDPSKLLSFQTPHGGISSSNLQFNKQNQQAPMSQLPQPPTTLSQQQQLQQLLHSSLNHQQQQSQSQQQQQQQQLLQQQQQLQSQQHSNNNQSQSQQQQQLLQQQQQQQLQQQHQQPLQQQTQQQQLRTQPLQSHSHPQPQQLQQHKLQQLQVPQNQLYNGQQAAQQHQSQQASTHHLQPQLVSGSMASSVITPPSSSLNQSFQQQQQQSKQLQQAHHHLGASTSQSSVIETSKSSSNLMSAPPQETQFSRQVEQQQPPGLNGQNQQTLLQQKAHQAQAQQIFQQSLLEQPHIQFQLLQRLQQQQQQQFLSPQSQLPHHQLQSQQLQQLPTLSQGHQFPSSCTNNGLSTLQPPQMLVSRPQEKQNPPVGGGVKAYSGITDGGDAPSSSTSPSTNNCQISSSGFLNRSQSGPAILIPDAAIDMSGNLVQDLYSKSDMRLKQELVGQQKSKASLTDHQLEASASGTSYGLDGGENNRQQNFLAPTFGLDGDSRNSLLGGANVDNGFVPDTLLSRGYDSQKDLQNMLSNYGGVTNDIGTEMSTSAVRTQSFGVPNVPAISNDLAVNDAGVLGGGLWPAQTQRMRTYTKVQKRGSVGRSIDVNRYRGYDELRHDLARMFGIEGQLEDPQTSDWKLVYVDHENDILLVGDDPWEEFVNCVQSIKILSSAEVQQMSLDGNFAGVPVTNQACSGGDSGNAWRGHYDDNSATSFNR</sequence>
<reference key="1">
    <citation type="journal article" date="1999" name="Proc. Natl. Acad. Sci. U.S.A.">
        <title>Activation and repression of transcription by auxin-response factors.</title>
        <authorList>
            <person name="Ulmasov T."/>
            <person name="Hagen G."/>
            <person name="Guilfoyle T.J."/>
        </authorList>
    </citation>
    <scope>NUCLEOTIDE SEQUENCE [MRNA] (ISOFORM 1)</scope>
    <scope>TRANSCRIPTIONAL ACTIVATOR</scope>
    <source>
        <strain>cv. Columbia</strain>
    </source>
</reference>
<reference key="2">
    <citation type="journal article" date="2005" name="Plant Cell">
        <title>Functional genomic analysis of the AUXIN RESPONSE FACTOR gene family members in Arabidopsis thaliana: unique and overlapping functions of ARF7 and ARF19.</title>
        <authorList>
            <person name="Okushima Y."/>
            <person name="Overvoorde P.J."/>
            <person name="Arima K."/>
            <person name="Alonso J.M."/>
            <person name="Chan A."/>
            <person name="Chang C."/>
            <person name="Ecker J.R."/>
            <person name="Hughes B."/>
            <person name="Lui A."/>
            <person name="Nguyen D."/>
            <person name="Onodera C."/>
            <person name="Quach H."/>
            <person name="Smith A."/>
            <person name="Yu G."/>
            <person name="Theologis A."/>
        </authorList>
    </citation>
    <scope>NUCLEOTIDE SEQUENCE [GENOMIC DNA / MRNA] (ISOFORM 1)</scope>
    <source>
        <strain>cv. Columbia</strain>
    </source>
</reference>
<reference key="3">
    <citation type="submission" date="1997-09" db="EMBL/GenBank/DDBJ databases">
        <title>A novel transcription factor, closely related to the Arabidopsis MP protein, interacts genetically with C-terminal domains of the MP product.</title>
        <authorList>
            <person name="Hardtke C.S."/>
            <person name="Berleth T."/>
        </authorList>
    </citation>
    <scope>NUCLEOTIDE SEQUENCE [MRNA] (ISOFORM 2)</scope>
    <source>
        <strain>cv. Columbia</strain>
    </source>
</reference>
<reference key="4">
    <citation type="journal article" date="2000" name="Plant Cell">
        <title>The NPH4 locus encodes the auxin response factor ARF7, a conditional regulator of differential growth in aerial Arabidopsis tissue.</title>
        <authorList>
            <person name="Harper R.M."/>
            <person name="Stowe-Evans E.L."/>
            <person name="Luesse D.R."/>
            <person name="Muto H."/>
            <person name="Tatematsu K."/>
            <person name="Watahiki M.K."/>
            <person name="Yamamoto K.T."/>
            <person name="Liscum E."/>
        </authorList>
    </citation>
    <scope>NUCLEOTIDE SEQUENCE [GENOMIC DNA]</scope>
    <source>
        <strain>cv. Columbia</strain>
    </source>
</reference>
<reference key="5">
    <citation type="journal article" date="2000" name="Nature">
        <title>Sequence and analysis of chromosome 5 of the plant Arabidopsis thaliana.</title>
        <authorList>
            <person name="Tabata S."/>
            <person name="Kaneko T."/>
            <person name="Nakamura Y."/>
            <person name="Kotani H."/>
            <person name="Kato T."/>
            <person name="Asamizu E."/>
            <person name="Miyajima N."/>
            <person name="Sasamoto S."/>
            <person name="Kimura T."/>
            <person name="Hosouchi T."/>
            <person name="Kawashima K."/>
            <person name="Kohara M."/>
            <person name="Matsumoto M."/>
            <person name="Matsuno A."/>
            <person name="Muraki A."/>
            <person name="Nakayama S."/>
            <person name="Nakazaki N."/>
            <person name="Naruo K."/>
            <person name="Okumura S."/>
            <person name="Shinpo S."/>
            <person name="Takeuchi C."/>
            <person name="Wada T."/>
            <person name="Watanabe A."/>
            <person name="Yamada M."/>
            <person name="Yasuda M."/>
            <person name="Sato S."/>
            <person name="de la Bastide M."/>
            <person name="Huang E."/>
            <person name="Spiegel L."/>
            <person name="Gnoj L."/>
            <person name="O'Shaughnessy A."/>
            <person name="Preston R."/>
            <person name="Habermann K."/>
            <person name="Murray J."/>
            <person name="Johnson D."/>
            <person name="Rohlfing T."/>
            <person name="Nelson J."/>
            <person name="Stoneking T."/>
            <person name="Pepin K."/>
            <person name="Spieth J."/>
            <person name="Sekhon M."/>
            <person name="Armstrong J."/>
            <person name="Becker M."/>
            <person name="Belter E."/>
            <person name="Cordum H."/>
            <person name="Cordes M."/>
            <person name="Courtney L."/>
            <person name="Courtney W."/>
            <person name="Dante M."/>
            <person name="Du H."/>
            <person name="Edwards J."/>
            <person name="Fryman J."/>
            <person name="Haakensen B."/>
            <person name="Lamar E."/>
            <person name="Latreille P."/>
            <person name="Leonard S."/>
            <person name="Meyer R."/>
            <person name="Mulvaney E."/>
            <person name="Ozersky P."/>
            <person name="Riley A."/>
            <person name="Strowmatt C."/>
            <person name="Wagner-McPherson C."/>
            <person name="Wollam A."/>
            <person name="Yoakum M."/>
            <person name="Bell M."/>
            <person name="Dedhia N."/>
            <person name="Parnell L."/>
            <person name="Shah R."/>
            <person name="Rodriguez M."/>
            <person name="Hoon See L."/>
            <person name="Vil D."/>
            <person name="Baker J."/>
            <person name="Kirchoff K."/>
            <person name="Toth K."/>
            <person name="King L."/>
            <person name="Bahret A."/>
            <person name="Miller B."/>
            <person name="Marra M.A."/>
            <person name="Martienssen R."/>
            <person name="McCombie W.R."/>
            <person name="Wilson R.K."/>
            <person name="Murphy G."/>
            <person name="Bancroft I."/>
            <person name="Volckaert G."/>
            <person name="Wambutt R."/>
            <person name="Duesterhoeft A."/>
            <person name="Stiekema W."/>
            <person name="Pohl T."/>
            <person name="Entian K.-D."/>
            <person name="Terryn N."/>
            <person name="Hartley N."/>
            <person name="Bent E."/>
            <person name="Johnson S."/>
            <person name="Langham S.-A."/>
            <person name="McCullagh B."/>
            <person name="Robben J."/>
            <person name="Grymonprez B."/>
            <person name="Zimmermann W."/>
            <person name="Ramsperger U."/>
            <person name="Wedler H."/>
            <person name="Balke K."/>
            <person name="Wedler E."/>
            <person name="Peters S."/>
            <person name="van Staveren M."/>
            <person name="Dirkse W."/>
            <person name="Mooijman P."/>
            <person name="Klein Lankhorst R."/>
            <person name="Weitzenegger T."/>
            <person name="Bothe G."/>
            <person name="Rose M."/>
            <person name="Hauf J."/>
            <person name="Berneiser S."/>
            <person name="Hempel S."/>
            <person name="Feldpausch M."/>
            <person name="Lamberth S."/>
            <person name="Villarroel R."/>
            <person name="Gielen J."/>
            <person name="Ardiles W."/>
            <person name="Bents O."/>
            <person name="Lemcke K."/>
            <person name="Kolesov G."/>
            <person name="Mayer K.F.X."/>
            <person name="Rudd S."/>
            <person name="Schoof H."/>
            <person name="Schueller C."/>
            <person name="Zaccaria P."/>
            <person name="Mewes H.-W."/>
            <person name="Bevan M."/>
            <person name="Fransz P.F."/>
        </authorList>
    </citation>
    <scope>NUCLEOTIDE SEQUENCE [LARGE SCALE GENOMIC DNA]</scope>
    <source>
        <strain>cv. Columbia</strain>
    </source>
</reference>
<reference key="6">
    <citation type="journal article" date="2017" name="Plant J.">
        <title>Araport11: a complete reannotation of the Arabidopsis thaliana reference genome.</title>
        <authorList>
            <person name="Cheng C.Y."/>
            <person name="Krishnakumar V."/>
            <person name="Chan A.P."/>
            <person name="Thibaud-Nissen F."/>
            <person name="Schobel S."/>
            <person name="Town C.D."/>
        </authorList>
    </citation>
    <scope>GENOME REANNOTATION</scope>
    <source>
        <strain>cv. Columbia</strain>
    </source>
</reference>
<reference key="7">
    <citation type="journal article" date="2003" name="Science">
        <title>Empirical analysis of transcriptional activity in the Arabidopsis genome.</title>
        <authorList>
            <person name="Yamada K."/>
            <person name="Lim J."/>
            <person name="Dale J.M."/>
            <person name="Chen H."/>
            <person name="Shinn P."/>
            <person name="Palm C.J."/>
            <person name="Southwick A.M."/>
            <person name="Wu H.C."/>
            <person name="Kim C.J."/>
            <person name="Nguyen M."/>
            <person name="Pham P.K."/>
            <person name="Cheuk R.F."/>
            <person name="Karlin-Newmann G."/>
            <person name="Liu S.X."/>
            <person name="Lam B."/>
            <person name="Sakano H."/>
            <person name="Wu T."/>
            <person name="Yu G."/>
            <person name="Miranda M."/>
            <person name="Quach H.L."/>
            <person name="Tripp M."/>
            <person name="Chang C.H."/>
            <person name="Lee J.M."/>
            <person name="Toriumi M.J."/>
            <person name="Chan M.M."/>
            <person name="Tang C.C."/>
            <person name="Onodera C.S."/>
            <person name="Deng J.M."/>
            <person name="Akiyama K."/>
            <person name="Ansari Y."/>
            <person name="Arakawa T."/>
            <person name="Banh J."/>
            <person name="Banno F."/>
            <person name="Bowser L."/>
            <person name="Brooks S.Y."/>
            <person name="Carninci P."/>
            <person name="Chao Q."/>
            <person name="Choy N."/>
            <person name="Enju A."/>
            <person name="Goldsmith A.D."/>
            <person name="Gurjal M."/>
            <person name="Hansen N.F."/>
            <person name="Hayashizaki Y."/>
            <person name="Johnson-Hopson C."/>
            <person name="Hsuan V.W."/>
            <person name="Iida K."/>
            <person name="Karnes M."/>
            <person name="Khan S."/>
            <person name="Koesema E."/>
            <person name="Ishida J."/>
            <person name="Jiang P.X."/>
            <person name="Jones T."/>
            <person name="Kawai J."/>
            <person name="Kamiya A."/>
            <person name="Meyers C."/>
            <person name="Nakajima M."/>
            <person name="Narusaka M."/>
            <person name="Seki M."/>
            <person name="Sakurai T."/>
            <person name="Satou M."/>
            <person name="Tamse R."/>
            <person name="Vaysberg M."/>
            <person name="Wallender E.K."/>
            <person name="Wong C."/>
            <person name="Yamamura Y."/>
            <person name="Yuan S."/>
            <person name="Shinozaki K."/>
            <person name="Davis R.W."/>
            <person name="Theologis A."/>
            <person name="Ecker J.R."/>
        </authorList>
    </citation>
    <scope>NUCLEOTIDE SEQUENCE [LARGE SCALE MRNA] OF 120-1164 (ISOFORM 1)</scope>
    <source>
        <strain>cv. Columbia</strain>
    </source>
</reference>
<reference key="8">
    <citation type="submission" date="2006-07" db="EMBL/GenBank/DDBJ databases">
        <title>Large-scale analysis of RIKEN Arabidopsis full-length (RAFL) cDNAs.</title>
        <authorList>
            <person name="Totoki Y."/>
            <person name="Seki M."/>
            <person name="Ishida J."/>
            <person name="Nakajima M."/>
            <person name="Enju A."/>
            <person name="Kamiya A."/>
            <person name="Narusaka M."/>
            <person name="Shin-i T."/>
            <person name="Nakagawa M."/>
            <person name="Sakamoto N."/>
            <person name="Oishi K."/>
            <person name="Kohara Y."/>
            <person name="Kobayashi M."/>
            <person name="Toyoda A."/>
            <person name="Sakaki Y."/>
            <person name="Sakurai T."/>
            <person name="Iida K."/>
            <person name="Akiyama K."/>
            <person name="Satou M."/>
            <person name="Toyoda T."/>
            <person name="Konagaya A."/>
            <person name="Carninci P."/>
            <person name="Kawai J."/>
            <person name="Hayashizaki Y."/>
            <person name="Shinozaki K."/>
        </authorList>
    </citation>
    <scope>NUCLEOTIDE SEQUENCE [LARGE SCALE MRNA] OF 551-966</scope>
    <source>
        <strain>cv. Columbia</strain>
    </source>
</reference>
<reference key="9">
    <citation type="journal article" date="1997" name="Proc. Natl. Acad. Sci. U.S.A.">
        <title>Protein-protein interactions among the Aux/IAA proteins.</title>
        <authorList>
            <person name="Kim J."/>
            <person name="Harter K."/>
            <person name="Theologis A."/>
        </authorList>
    </citation>
    <scope>NUCLEOTIDE SEQUENCE [MRNA] OF 560-1164 (ISOFORMS 1 AND 3)</scope>
    <source>
        <strain>cv. Columbia</strain>
    </source>
</reference>
<reference key="10">
    <citation type="journal article" date="1999" name="Plant J.">
        <title>Dimerization and DNA binding of auxin response factors.</title>
        <authorList>
            <person name="Ulmasov T."/>
            <person name="Hagen G."/>
            <person name="Guilfoyle T.J."/>
        </authorList>
    </citation>
    <scope>DIMERIZATION</scope>
    <scope>TISSUE SPECIFICITY</scope>
</reference>
<reference key="11">
    <citation type="journal article" date="2002" name="Plant Mol. Biol.">
        <title>Auxin-responsive gene expression: genes, promoters and regulatory factors.</title>
        <authorList>
            <person name="Hagen G."/>
            <person name="Guilfoyle T.J."/>
        </authorList>
    </citation>
    <scope>GENE FAMILY</scope>
    <scope>NOMENCLATURE</scope>
    <scope>FUNCTION</scope>
</reference>
<reference key="12">
    <citation type="journal article" date="2004" name="Plant Cell">
        <title>MASSUGU2 encodes Aux/IAA19, an auxin-regulated protein that functions together with the transcriptional activator NPH4/ARF7 to regulate differential growth responses of hypocotyl and formation of lateral roots in Arabidopsis thaliana.</title>
        <authorList>
            <person name="Tatematsu K."/>
            <person name="Kumagai S."/>
            <person name="Muto H."/>
            <person name="Sato A."/>
            <person name="Watahiki M.K."/>
            <person name="Harper R.M."/>
            <person name="Liscum E."/>
            <person name="Yamamoto K.T."/>
        </authorList>
    </citation>
    <scope>INTERACTION WITH IAA19</scope>
</reference>
<reference key="13">
    <citation type="journal article" date="2004" name="Development">
        <title>Overlapping and non-redundant functions of the Arabidopsis auxin response factors MONOPTEROS and NONPHOTOTROPIC HYPOCOTYL 4.</title>
        <authorList>
            <person name="Hardtke C.S."/>
            <person name="Ckurshumova W."/>
            <person name="Vidaurre D.P."/>
            <person name="Singh S.A."/>
            <person name="Stamatiou G."/>
            <person name="Tiwari S.B."/>
            <person name="Hagen G."/>
            <person name="Guilfoyle T.J."/>
            <person name="Berleth T."/>
        </authorList>
    </citation>
    <scope>FUNCTION</scope>
    <scope>INTERACTION WITH IAA12</scope>
</reference>
<reference key="14">
    <citation type="journal article" date="2006" name="Plant Physiol.">
        <title>A role for auxin response factor 19 in auxin and ethylene signaling in Arabidopsis.</title>
        <authorList>
            <person name="Li J."/>
            <person name="Dai X."/>
            <person name="Zhao Y."/>
        </authorList>
    </citation>
    <scope>FUNCTION</scope>
</reference>
<reference key="15">
    <citation type="journal article" date="2006" name="Proc. Natl. Acad. Sci. U.S.A.">
        <title>A gradient of auxin and auxin-dependent transcription precedes tropic growth responses.</title>
        <authorList>
            <person name="Esmon C.A."/>
            <person name="Tinsley A.G."/>
            <person name="Ljung K."/>
            <person name="Sandberg G."/>
            <person name="Hearne L.B."/>
            <person name="Liscum E."/>
        </authorList>
    </citation>
    <scope>FUNCTION</scope>
</reference>
<reference key="16">
    <citation type="journal article" date="2007" name="Plant Cell">
        <title>ARF7 and ARF19 regulate lateral root formation via direct activation of LBD/ASL genes in Arabidopsis.</title>
        <authorList>
            <person name="Okushima Y."/>
            <person name="Fukaki H."/>
            <person name="Onoda M."/>
            <person name="Theologis A."/>
            <person name="Tasaka M."/>
        </authorList>
    </citation>
    <scope>FUNCTION</scope>
    <scope>SUBUNIT</scope>
    <scope>INTERACTION WITH ARF5</scope>
</reference>
<reference key="17">
    <citation type="journal article" date="2008" name="Trends Plant Sci.">
        <title>The plant B3 superfamily.</title>
        <authorList>
            <person name="Swaminathan K."/>
            <person name="Peterson K."/>
            <person name="Jack T."/>
        </authorList>
    </citation>
    <scope>GENE FAMILY</scope>
</reference>
<reference key="18">
    <citation type="journal article" date="2011" name="Mol. Syst. Biol.">
        <title>The auxin signalling network translates dynamic input into robust patterning at the shoot apex.</title>
        <authorList>
            <person name="Vernoux T."/>
            <person name="Brunoud G."/>
            <person name="Farcot E."/>
            <person name="Morin V."/>
            <person name="Van den Daele H."/>
            <person name="Legrand J."/>
            <person name="Oliva M."/>
            <person name="Das P."/>
            <person name="Larrieu A."/>
            <person name="Wells D."/>
            <person name="Guedon Y."/>
            <person name="Armitage L."/>
            <person name="Picard F."/>
            <person name="Guyomarc'h S."/>
            <person name="Cellier C."/>
            <person name="Parry G."/>
            <person name="Koumproglou R."/>
            <person name="Doonan J.H."/>
            <person name="Estelle M."/>
            <person name="Godin C."/>
            <person name="Kepinski S."/>
            <person name="Bennett M."/>
            <person name="De Veylder L."/>
            <person name="Traas J."/>
        </authorList>
    </citation>
    <scope>INTERACTION</scope>
</reference>
<reference key="19">
    <citation type="journal article" date="2017" name="Sci. Signal.">
        <title>Arabidopsis ATXR2 deposits H3K36me3 at the promoters of LBD genes to facilitate cellular dedifferentiation.</title>
        <authorList>
            <person name="Lee K."/>
            <person name="Park O.S."/>
            <person name="Seo P.J."/>
        </authorList>
    </citation>
    <scope>FUNCTION</scope>
    <scope>DISRUPTION PHENOTYPE</scope>
    <scope>INTERACTION WITH ATXR2</scope>
    <scope>SUBCELLULAR LOCATION</scope>
    <source>
        <strain>cv. Columbia</strain>
    </source>
</reference>
<reference key="20">
    <citation type="journal article" date="2018" name="Plant J.">
        <title>JMJ30-mediated demethylation of H3K9me3 drives tissue identity changes to promote callus formation in Arabidopsis.</title>
        <authorList>
            <person name="Lee K."/>
            <person name="Park O.-S."/>
            <person name="Seo P.J."/>
        </authorList>
    </citation>
    <scope>INTERACTION WITH JMJ30</scope>
    <source>
        <strain>cv. Columbia</strain>
    </source>
</reference>
<reference key="21">
    <citation type="journal article" date="2014" name="Proc. Natl. Acad. Sci. U.S.A.">
        <title>Molecular basis for AUXIN RESPONSE FACTOR protein interaction and the control of auxin response repression.</title>
        <authorList>
            <person name="Korasick D.A."/>
            <person name="Westfall C.S."/>
            <person name="Lee S.G."/>
            <person name="Nanao M.H."/>
            <person name="Dumas R."/>
            <person name="Hagen G."/>
            <person name="Guilfoyle T.J."/>
            <person name="Jez J.M."/>
            <person name="Strader L.C."/>
        </authorList>
    </citation>
    <scope>X-RAY CRYSTALLOGRAPHY (2.40 ANGSTROMS) OF 1036-1126</scope>
    <scope>MUTAGENESIS OF LYS-1041; ASP-1091 AND ASP-1095</scope>
    <scope>INTERACTION WITH IAA17</scope>
    <scope>DOMAIN</scope>
</reference>
<organism>
    <name type="scientific">Arabidopsis thaliana</name>
    <name type="common">Mouse-ear cress</name>
    <dbReference type="NCBI Taxonomy" id="3702"/>
    <lineage>
        <taxon>Eukaryota</taxon>
        <taxon>Viridiplantae</taxon>
        <taxon>Streptophyta</taxon>
        <taxon>Embryophyta</taxon>
        <taxon>Tracheophyta</taxon>
        <taxon>Spermatophyta</taxon>
        <taxon>Magnoliopsida</taxon>
        <taxon>eudicotyledons</taxon>
        <taxon>Gunneridae</taxon>
        <taxon>Pentapetalae</taxon>
        <taxon>rosids</taxon>
        <taxon>malvids</taxon>
        <taxon>Brassicales</taxon>
        <taxon>Brassicaceae</taxon>
        <taxon>Camelineae</taxon>
        <taxon>Arabidopsis</taxon>
    </lineage>
</organism>
<accession>P93022</accession>
<accession>O24411</accession>
<accession>P93023</accession>
<accession>Q0WWZ8</accession>
<accession>Q5IRX8</accession>
<accession>Q8RXZ7</accession>
<accession>Q9LCZ5</accession>
<accession>Q9SBK4</accession>
<accession>Q9SYQ6</accession>
<gene>
    <name evidence="15 16 19" type="primary">ARF7</name>
    <name type="synonym">BIP</name>
    <name evidence="21" type="synonym">IAA21</name>
    <name evidence="21" type="synonym">IAA23</name>
    <name evidence="21" type="synonym">IAA25</name>
    <name evidence="18" type="synonym">MSG1</name>
    <name evidence="17 19" type="synonym">NPH4</name>
    <name evidence="18 20" type="synonym">TIR5</name>
    <name evidence="24" type="ordered locus">At5g20730</name>
    <name evidence="25" type="ORF">T1M15.130</name>
</gene>
<evidence type="ECO:0000255" key="1">
    <source>
        <dbReference type="PROSITE-ProRule" id="PRU00326"/>
    </source>
</evidence>
<evidence type="ECO:0000255" key="2">
    <source>
        <dbReference type="PROSITE-ProRule" id="PRU01081"/>
    </source>
</evidence>
<evidence type="ECO:0000256" key="3">
    <source>
        <dbReference type="SAM" id="MobiDB-lite"/>
    </source>
</evidence>
<evidence type="ECO:0000269" key="4">
    <source>
    </source>
</evidence>
<evidence type="ECO:0000269" key="5">
    <source>
    </source>
</evidence>
<evidence type="ECO:0000269" key="6">
    <source>
    </source>
</evidence>
<evidence type="ECO:0000269" key="7">
    <source>
    </source>
</evidence>
<evidence type="ECO:0000269" key="8">
    <source>
    </source>
</evidence>
<evidence type="ECO:0000269" key="9">
    <source>
    </source>
</evidence>
<evidence type="ECO:0000269" key="10">
    <source>
    </source>
</evidence>
<evidence type="ECO:0000269" key="11">
    <source>
    </source>
</evidence>
<evidence type="ECO:0000269" key="12">
    <source>
    </source>
</evidence>
<evidence type="ECO:0000269" key="13">
    <source>
    </source>
</evidence>
<evidence type="ECO:0000269" key="14">
    <source>
    </source>
</evidence>
<evidence type="ECO:0000303" key="15">
    <source>
    </source>
</evidence>
<evidence type="ECO:0000303" key="16">
    <source>
    </source>
</evidence>
<evidence type="ECO:0000303" key="17">
    <source>
    </source>
</evidence>
<evidence type="ECO:0000303" key="18">
    <source>
    </source>
</evidence>
<evidence type="ECO:0000303" key="19">
    <source>
    </source>
</evidence>
<evidence type="ECO:0000303" key="20">
    <source>
    </source>
</evidence>
<evidence type="ECO:0000303" key="21">
    <source>
    </source>
</evidence>
<evidence type="ECO:0000303" key="22">
    <source ref="3"/>
</evidence>
<evidence type="ECO:0000305" key="23"/>
<evidence type="ECO:0000312" key="24">
    <source>
        <dbReference type="Araport" id="AT5G20730"/>
    </source>
</evidence>
<evidence type="ECO:0000312" key="25">
    <source>
        <dbReference type="EMBL" id="AF296832"/>
    </source>
</evidence>
<evidence type="ECO:0007829" key="26">
    <source>
        <dbReference type="PDB" id="4NJ6"/>
    </source>
</evidence>
<keyword id="KW-0002">3D-structure</keyword>
<keyword id="KW-0010">Activator</keyword>
<keyword id="KW-0025">Alternative splicing</keyword>
<keyword id="KW-0927">Auxin signaling pathway</keyword>
<keyword id="KW-0217">Developmental protein</keyword>
<keyword id="KW-0238">DNA-binding</keyword>
<keyword id="KW-0539">Nucleus</keyword>
<keyword id="KW-1185">Reference proteome</keyword>
<keyword id="KW-0804">Transcription</keyword>
<keyword id="KW-0805">Transcription regulation</keyword>
<comment type="function">
    <text evidence="5 7 8 9 10 13">Auxin response factors (ARFs) are transcriptional factors that bind specifically to the DNA sequence 5'-TGTCTC-3' found in the auxin-responsive promoter elements (AuxREs). Acts as a transcriptional activator of several tropic stimulus-induced (TSI) genes, including SAUR50. Formation of heterodimers with Aux/IAA proteins may alter their ability to modulate early auxin response genes expression. Required for differential growth responses of aerial tissues. Involved in ethylene responses. Regulates lateral root formation through direct regulation of LBD16 and/or LBD29 (PubMed:29184030). Functionally redundant with ARF19 (PubMed:29184030). Mediates embryo axis formation and vascular tissues differentiation. Functionally redundant with ARF5. Involved in cellular dedifferentiation during callus formation on callus-inducing medium (CIM) and in an ATXR2-dependent manner (PubMed:29184030).</text>
</comment>
<comment type="subunit">
    <text evidence="4 6 7 10 11 12 13 14">Homodimers and heterodimers (PubMed:10476078, PubMed:21734647). Interacts with the auxin-responsive proteins IAA1 and IAA12 (BODENLOS) (PubMed:14973283, PubMed:21734647). Interacts (via PB1 domain) with IAA17 (via PB1 domain) (PubMed:21734647, PubMed:24706860). Interacts with IAA19 (PubMed:14729917, PubMed:21734647). Interacts with ARF5 (PubMed:17259263, PubMed:21734647). Binds to JMJ30 (PubMed:29923261). Binds to ATXR2 in the nucleus (PubMed:29184030).</text>
</comment>
<comment type="interaction">
    <interactant intactId="EBI-632284">
        <id>P93022</id>
    </interactant>
    <interactant intactId="EBI-1798250">
        <id>Q39011</id>
        <label>ASK7</label>
    </interactant>
    <organismsDiffer>false</organismsDiffer>
    <experiments>2</experiments>
</comment>
<comment type="interaction">
    <interactant intactId="EBI-632284">
        <id>P93022</id>
    </interactant>
    <interactant intactId="EBI-630505">
        <id>P49677</id>
        <label>IAA1</label>
    </interactant>
    <organismsDiffer>false</organismsDiffer>
    <experiments>4</experiments>
</comment>
<comment type="interaction">
    <interactant intactId="EBI-632284">
        <id>P93022</id>
    </interactant>
    <interactant intactId="EBI-2295562">
        <id>Q38832</id>
        <label>IAA14</label>
    </interactant>
    <organismsDiffer>false</organismsDiffer>
    <experiments>3</experiments>
</comment>
<comment type="interaction">
    <interactant intactId="EBI-632284">
        <id>P93022</id>
    </interactant>
    <interactant intactId="EBI-2295525">
        <id>O24408</id>
        <label>IAA18</label>
    </interactant>
    <organismsDiffer>false</organismsDiffer>
    <experiments>3</experiments>
</comment>
<comment type="interaction">
    <interactant intactId="EBI-632284">
        <id>P93022</id>
    </interactant>
    <interactant intactId="EBI-632257">
        <id>O24409</id>
        <label>IAA19</label>
    </interactant>
    <organismsDiffer>false</organismsDiffer>
    <experiments>5</experiments>
</comment>
<comment type="interaction">
    <interactant intactId="EBI-632284">
        <id>P93022</id>
    </interactant>
    <interactant intactId="EBI-307174">
        <id>Q38822</id>
        <label>IAA3</label>
    </interactant>
    <organismsDiffer>false</organismsDiffer>
    <experiments>2</experiments>
</comment>
<comment type="interaction">
    <interactant intactId="EBI-632284">
        <id>P93022</id>
    </interactant>
    <interactant intactId="EBI-2324225">
        <id>Q9SN12</id>
        <label>MYB77</label>
    </interactant>
    <organismsDiffer>false</organismsDiffer>
    <experiments>3</experiments>
</comment>
<comment type="subcellular location">
    <subcellularLocation>
        <location evidence="1 13">Nucleus</location>
    </subcellularLocation>
</comment>
<comment type="alternative products">
    <event type="alternative splicing"/>
    <isoform>
        <id>P93022-1</id>
        <name>1</name>
        <sequence type="displayed"/>
    </isoform>
    <isoform>
        <id>P93022-2</id>
        <name>2</name>
        <sequence type="described" ref="VSP_010090"/>
    </isoform>
    <isoform>
        <id>P93022-3</id>
        <name>3</name>
        <sequence type="described" ref="VSP_010091"/>
    </isoform>
</comment>
<comment type="tissue specificity">
    <text evidence="4">Expressed in the whole plant.</text>
</comment>
<comment type="domain">
    <text evidence="12">The PB1 domain provides both positive and negative electrostatic interfaces for directional protein interaction.</text>
</comment>
<comment type="disruption phenotype">
    <text evidence="13">The arf7-1 arf19-2 double mutant is defective in callus formation.</text>
</comment>
<comment type="miscellaneous">
    <molecule>Isoform 2</molecule>
    <text evidence="23">May be due to a competing donor splice site.</text>
</comment>
<comment type="miscellaneous">
    <molecule>Isoform 3</molecule>
    <text evidence="23">Incomplete sequence. May be due to exon skipping.</text>
</comment>
<comment type="similarity">
    <text evidence="23">Belongs to the ARF family.</text>
</comment>
<comment type="sequence caution" evidence="23">
    <conflict type="frameshift">
        <sequence resource="EMBL-CDS" id="AAB92474"/>
    </conflict>
</comment>
<name>ARFG_ARATH</name>
<protein>
    <recommendedName>
        <fullName evidence="15 16 19">Auxin response factor 7</fullName>
    </recommendedName>
    <alternativeName>
        <fullName evidence="21">Auxin-responsive protein IAA21/IAA23/IAA25</fullName>
    </alternativeName>
    <alternativeName>
        <fullName>Protein BIPOSTO</fullName>
    </alternativeName>
    <alternativeName>
        <fullName evidence="18">Protein MASSUGU 1</fullName>
    </alternativeName>
    <alternativeName>
        <fullName evidence="17 19">Protein NON-PHOTOTROPIC HYPOCOTYL 4</fullName>
    </alternativeName>
    <alternativeName>
        <fullName evidence="18 20">Protein TRANSPORT INHIBITOR RESPONSE 5</fullName>
    </alternativeName>
</protein>